<gene>
    <name type="ORF">DDB_G0286001</name>
</gene>
<protein>
    <recommendedName>
        <fullName>Putative uncharacterized protein DDB_G0286001</fullName>
    </recommendedName>
</protein>
<accession>Q54MF2</accession>
<sequence length="121" mass="13991">MMLIFVKITSFLERYIMVRKFKSELVRISSESLPPQLRIEVEKQIITDVAHCMELVRKIENANISIYDKSLYTGKSVQNQFTTYNANNDDYESPYKTPKIKSNPSLDSSGSSHYSFIKAIK</sequence>
<name>Y8776_DICDI</name>
<organism>
    <name type="scientific">Dictyostelium discoideum</name>
    <name type="common">Social amoeba</name>
    <dbReference type="NCBI Taxonomy" id="44689"/>
    <lineage>
        <taxon>Eukaryota</taxon>
        <taxon>Amoebozoa</taxon>
        <taxon>Evosea</taxon>
        <taxon>Eumycetozoa</taxon>
        <taxon>Dictyostelia</taxon>
        <taxon>Dictyosteliales</taxon>
        <taxon>Dictyosteliaceae</taxon>
        <taxon>Dictyostelium</taxon>
    </lineage>
</organism>
<proteinExistence type="predicted"/>
<keyword id="KW-1185">Reference proteome</keyword>
<feature type="chain" id="PRO_0000348521" description="Putative uncharacterized protein DDB_G0286001">
    <location>
        <begin position="1"/>
        <end position="121"/>
    </location>
</feature>
<feature type="region of interest" description="Disordered" evidence="1">
    <location>
        <begin position="85"/>
        <end position="111"/>
    </location>
</feature>
<feature type="compositionally biased region" description="Polar residues" evidence="1">
    <location>
        <begin position="100"/>
        <end position="111"/>
    </location>
</feature>
<reference key="1">
    <citation type="journal article" date="2005" name="Nature">
        <title>The genome of the social amoeba Dictyostelium discoideum.</title>
        <authorList>
            <person name="Eichinger L."/>
            <person name="Pachebat J.A."/>
            <person name="Gloeckner G."/>
            <person name="Rajandream M.A."/>
            <person name="Sucgang R."/>
            <person name="Berriman M."/>
            <person name="Song J."/>
            <person name="Olsen R."/>
            <person name="Szafranski K."/>
            <person name="Xu Q."/>
            <person name="Tunggal B."/>
            <person name="Kummerfeld S."/>
            <person name="Madera M."/>
            <person name="Konfortov B.A."/>
            <person name="Rivero F."/>
            <person name="Bankier A.T."/>
            <person name="Lehmann R."/>
            <person name="Hamlin N."/>
            <person name="Davies R."/>
            <person name="Gaudet P."/>
            <person name="Fey P."/>
            <person name="Pilcher K."/>
            <person name="Chen G."/>
            <person name="Saunders D."/>
            <person name="Sodergren E.J."/>
            <person name="Davis P."/>
            <person name="Kerhornou A."/>
            <person name="Nie X."/>
            <person name="Hall N."/>
            <person name="Anjard C."/>
            <person name="Hemphill L."/>
            <person name="Bason N."/>
            <person name="Farbrother P."/>
            <person name="Desany B."/>
            <person name="Just E."/>
            <person name="Morio T."/>
            <person name="Rost R."/>
            <person name="Churcher C.M."/>
            <person name="Cooper J."/>
            <person name="Haydock S."/>
            <person name="van Driessche N."/>
            <person name="Cronin A."/>
            <person name="Goodhead I."/>
            <person name="Muzny D.M."/>
            <person name="Mourier T."/>
            <person name="Pain A."/>
            <person name="Lu M."/>
            <person name="Harper D."/>
            <person name="Lindsay R."/>
            <person name="Hauser H."/>
            <person name="James K.D."/>
            <person name="Quiles M."/>
            <person name="Madan Babu M."/>
            <person name="Saito T."/>
            <person name="Buchrieser C."/>
            <person name="Wardroper A."/>
            <person name="Felder M."/>
            <person name="Thangavelu M."/>
            <person name="Johnson D."/>
            <person name="Knights A."/>
            <person name="Loulseged H."/>
            <person name="Mungall K.L."/>
            <person name="Oliver K."/>
            <person name="Price C."/>
            <person name="Quail M.A."/>
            <person name="Urushihara H."/>
            <person name="Hernandez J."/>
            <person name="Rabbinowitsch E."/>
            <person name="Steffen D."/>
            <person name="Sanders M."/>
            <person name="Ma J."/>
            <person name="Kohara Y."/>
            <person name="Sharp S."/>
            <person name="Simmonds M.N."/>
            <person name="Spiegler S."/>
            <person name="Tivey A."/>
            <person name="Sugano S."/>
            <person name="White B."/>
            <person name="Walker D."/>
            <person name="Woodward J.R."/>
            <person name="Winckler T."/>
            <person name="Tanaka Y."/>
            <person name="Shaulsky G."/>
            <person name="Schleicher M."/>
            <person name="Weinstock G.M."/>
            <person name="Rosenthal A."/>
            <person name="Cox E.C."/>
            <person name="Chisholm R.L."/>
            <person name="Gibbs R.A."/>
            <person name="Loomis W.F."/>
            <person name="Platzer M."/>
            <person name="Kay R.R."/>
            <person name="Williams J.G."/>
            <person name="Dear P.H."/>
            <person name="Noegel A.A."/>
            <person name="Barrell B.G."/>
            <person name="Kuspa A."/>
        </authorList>
    </citation>
    <scope>NUCLEOTIDE SEQUENCE [LARGE SCALE GENOMIC DNA]</scope>
    <source>
        <strain>AX4</strain>
    </source>
</reference>
<evidence type="ECO:0000256" key="1">
    <source>
        <dbReference type="SAM" id="MobiDB-lite"/>
    </source>
</evidence>
<dbReference type="EMBL" id="AAFI02000083">
    <property type="protein sequence ID" value="EAL64442.1"/>
    <property type="molecule type" value="Genomic_DNA"/>
</dbReference>
<dbReference type="RefSeq" id="XP_637945.1">
    <property type="nucleotide sequence ID" value="XM_632853.1"/>
</dbReference>
<dbReference type="PaxDb" id="44689-DDB0218776"/>
<dbReference type="EnsemblProtists" id="EAL64442">
    <property type="protein sequence ID" value="EAL64442"/>
    <property type="gene ID" value="DDB_G0286001"/>
</dbReference>
<dbReference type="GeneID" id="8625390"/>
<dbReference type="KEGG" id="ddi:DDB_G0286001"/>
<dbReference type="dictyBase" id="DDB_G0286001"/>
<dbReference type="VEuPathDB" id="AmoebaDB:DDB_G0286001"/>
<dbReference type="HOGENOM" id="CLU_2042438_0_0_1"/>
<dbReference type="InParanoid" id="Q54MF2"/>
<dbReference type="PRO" id="PR:Q54MF2"/>
<dbReference type="Proteomes" id="UP000002195">
    <property type="component" value="Chromosome 4"/>
</dbReference>